<organism>
    <name type="scientific">Bacillus subtilis (strain 168)</name>
    <dbReference type="NCBI Taxonomy" id="224308"/>
    <lineage>
        <taxon>Bacteria</taxon>
        <taxon>Bacillati</taxon>
        <taxon>Bacillota</taxon>
        <taxon>Bacilli</taxon>
        <taxon>Bacillales</taxon>
        <taxon>Bacillaceae</taxon>
        <taxon>Bacillus</taxon>
    </lineage>
</organism>
<protein>
    <recommendedName>
        <fullName evidence="8">Pyruvate carboxylase</fullName>
        <ecNumber evidence="6 7">6.4.1.1</ecNumber>
    </recommendedName>
    <alternativeName>
        <fullName>Pyruvic carboxylase</fullName>
        <shortName>PYC</shortName>
    </alternativeName>
</protein>
<keyword id="KW-0067">ATP-binding</keyword>
<keyword id="KW-0092">Biotin</keyword>
<keyword id="KW-0436">Ligase</keyword>
<keyword id="KW-0479">Metal-binding</keyword>
<keyword id="KW-0511">Multifunctional enzyme</keyword>
<keyword id="KW-0547">Nucleotide-binding</keyword>
<keyword id="KW-1185">Reference proteome</keyword>
<comment type="function">
    <text evidence="7">Catalyzes a 2-step reaction, involving the ATP-dependent carboxylation of the covalently attached biotin in the first step and the transfer of the carboxyl group to pyruvate in the second, leading to oxaloacetate production (PubMed:4146915). Fulfills an anaplerotic function in B.subtilis as it is necessary for growth on glucose, but is not required for sporulation (PubMed:4146915).</text>
</comment>
<comment type="catalytic activity">
    <reaction evidence="6 7">
        <text>hydrogencarbonate + pyruvate + ATP = oxaloacetate + ADP + phosphate + H(+)</text>
        <dbReference type="Rhea" id="RHEA:20844"/>
        <dbReference type="ChEBI" id="CHEBI:15361"/>
        <dbReference type="ChEBI" id="CHEBI:15378"/>
        <dbReference type="ChEBI" id="CHEBI:16452"/>
        <dbReference type="ChEBI" id="CHEBI:17544"/>
        <dbReference type="ChEBI" id="CHEBI:30616"/>
        <dbReference type="ChEBI" id="CHEBI:43474"/>
        <dbReference type="ChEBI" id="CHEBI:456216"/>
        <dbReference type="EC" id="6.4.1.1"/>
    </reaction>
</comment>
<comment type="cofactor">
    <cofactor evidence="6 7">
        <name>biotin</name>
        <dbReference type="ChEBI" id="CHEBI:57586"/>
    </cofactor>
</comment>
<comment type="activity regulation">
    <text evidence="6 7">Activated by the cyclic di-AMP (c-di-AMP) receptor DarB in the absence of c-di-AMP (PubMed:35130724). Allosterically activated by acetyl-CoA (PubMed:35130724, PubMed:4146915). Inhibited by the biotin-complexing protein avidin (PubMed:4146915).</text>
</comment>
<comment type="biophysicochemical properties">
    <kinetics>
        <KM evidence="6">0.23 mM for pyruvate</KM>
        <Vmax evidence="6">42.7 umol/min/mg enzyme (in the absence of DarB)</Vmax>
        <Vmax evidence="6">87.9 umol/min/mg enzyme (in the presence of DarB)</Vmax>
    </kinetics>
</comment>
<comment type="subunit">
    <text evidence="6 10">Homotetramer (Probable). At very low potassium concentrations, when intracellular levels of c-di-AMP are low, interacts with apo-DarB (PubMed:35130724). c-di-AMP inhibits the binding of DarB to PYC (PubMed:35130724). Does not bind directly c-di-AMP (PubMed:35130724).</text>
</comment>
<comment type="induction">
    <text evidence="9">Constitutively expressed.</text>
</comment>
<comment type="sequence caution" evidence="9">
    <conflict type="frameshift">
        <sequence resource="EMBL-CDS" id="CAB09721"/>
    </conflict>
</comment>
<sequence length="1148" mass="127937">MSQQSIQKVLVANRGEIAIRIFRACTELNIRTVAVYSKEDSGSYHRYKADEAYLVGEGKKPIDAYLDIEGIIDIAKRNKVDAIHPGYGFLSENIHFARRCEEEGIVFIGPKSEHLDMFGDKVKAREQAEKAGIPVIPGSDGPAETLEAVEQFGQANGYPIIIKASLGGGGRGMRIVRSESEVKEAYERAKSEAKAAFGNDEVYVEKLIENPKHIEVQVIGDKQGNVVHLFERDCSVQRRHQKVIEVAPSVSLSPELRDQICEAAVALAKNVNYINAGTVEFLVANNEFYFIEVNPRVQVEHTITEMITGVDIVQTQILVAQGHSLHSKKVNIPEQKDIFTIGYAIQSRVTTEDPQNDFMPDTGKIMAYRSGGGFGVRLDTGNSFQGAVITPYYDSLLVKLSTWALTFEQAAAKMVRNLQEFRIRGIKTNIPFLENVAKHEKFLTGQYDTSFIDTTPELFNFPKQKDRGTKMLTYIGNVTVNGFPGIGKKEKPAFDKPLGVKVDVDQQPARGTKQILDEKGAEGLANWVKEQKSVLLTDTTFRDAHQSLLATRIRSHDLKKIANPTAALWPELFSMEMWGGATFDVAYRFLKEDPWKRLEDLRKEVPNTLFQMLLRSSNAVGYTNYPDNVIKEFVKQSAQSGIDVFRIFDSLNWVKGMTLAIDAVRDTGKVAEAAICYTGDILDKNRTKYDLAYYTSMAKELEAAGAHILGIKDMAGLLKPQAAYELVSALKETIDIPVHLHTHDTSGNGIYMYAKAVEAGVDIIDVAVSSMAGLTSQPSASGFYHAMEGNDRRPEMNVQGVELLSQYWESVRKYYSEFESGMKSPHTEIYEHEMPGGQYSNLQQQAKGVGLGDRWNEVKEMYRRVNDMFGDIVKVTPSSKVVGDMALYMVQNNLTEKDVYEKGESLDFPDSVVELFKGNIGQPHGGFPEKLQKLILKGQEPITVRPGELLEPVSFEAIKQEFKEQHNLEISDQDAVAYALYPKVFTDYVKTTESYGDISVLDTPTFFYGMTLGEEIEVEIERGKTLIVKLISIGEPQPDATRVVYFELNGQPREVVIKDESIKSSVQERLKADRTNPSHIAASMPGTVIKVLAEAGTKVNKGDHLMINEAMKMETTVQAPFSGTIKQVHVKNGEPIQTGDLLLEIEKA</sequence>
<proteinExistence type="evidence at protein level"/>
<reference key="1">
    <citation type="journal article" date="1997" name="Nature">
        <title>The complete genome sequence of the Gram-positive bacterium Bacillus subtilis.</title>
        <authorList>
            <person name="Kunst F."/>
            <person name="Ogasawara N."/>
            <person name="Moszer I."/>
            <person name="Albertini A.M."/>
            <person name="Alloni G."/>
            <person name="Azevedo V."/>
            <person name="Bertero M.G."/>
            <person name="Bessieres P."/>
            <person name="Bolotin A."/>
            <person name="Borchert S."/>
            <person name="Borriss R."/>
            <person name="Boursier L."/>
            <person name="Brans A."/>
            <person name="Braun M."/>
            <person name="Brignell S.C."/>
            <person name="Bron S."/>
            <person name="Brouillet S."/>
            <person name="Bruschi C.V."/>
            <person name="Caldwell B."/>
            <person name="Capuano V."/>
            <person name="Carter N.M."/>
            <person name="Choi S.-K."/>
            <person name="Codani J.-J."/>
            <person name="Connerton I.F."/>
            <person name="Cummings N.J."/>
            <person name="Daniel R.A."/>
            <person name="Denizot F."/>
            <person name="Devine K.M."/>
            <person name="Duesterhoeft A."/>
            <person name="Ehrlich S.D."/>
            <person name="Emmerson P.T."/>
            <person name="Entian K.-D."/>
            <person name="Errington J."/>
            <person name="Fabret C."/>
            <person name="Ferrari E."/>
            <person name="Foulger D."/>
            <person name="Fritz C."/>
            <person name="Fujita M."/>
            <person name="Fujita Y."/>
            <person name="Fuma S."/>
            <person name="Galizzi A."/>
            <person name="Galleron N."/>
            <person name="Ghim S.-Y."/>
            <person name="Glaser P."/>
            <person name="Goffeau A."/>
            <person name="Golightly E.J."/>
            <person name="Grandi G."/>
            <person name="Guiseppi G."/>
            <person name="Guy B.J."/>
            <person name="Haga K."/>
            <person name="Haiech J."/>
            <person name="Harwood C.R."/>
            <person name="Henaut A."/>
            <person name="Hilbert H."/>
            <person name="Holsappel S."/>
            <person name="Hosono S."/>
            <person name="Hullo M.-F."/>
            <person name="Itaya M."/>
            <person name="Jones L.-M."/>
            <person name="Joris B."/>
            <person name="Karamata D."/>
            <person name="Kasahara Y."/>
            <person name="Klaerr-Blanchard M."/>
            <person name="Klein C."/>
            <person name="Kobayashi Y."/>
            <person name="Koetter P."/>
            <person name="Koningstein G."/>
            <person name="Krogh S."/>
            <person name="Kumano M."/>
            <person name="Kurita K."/>
            <person name="Lapidus A."/>
            <person name="Lardinois S."/>
            <person name="Lauber J."/>
            <person name="Lazarevic V."/>
            <person name="Lee S.-M."/>
            <person name="Levine A."/>
            <person name="Liu H."/>
            <person name="Masuda S."/>
            <person name="Mauel C."/>
            <person name="Medigue C."/>
            <person name="Medina N."/>
            <person name="Mellado R.P."/>
            <person name="Mizuno M."/>
            <person name="Moestl D."/>
            <person name="Nakai S."/>
            <person name="Noback M."/>
            <person name="Noone D."/>
            <person name="O'Reilly M."/>
            <person name="Ogawa K."/>
            <person name="Ogiwara A."/>
            <person name="Oudega B."/>
            <person name="Park S.-H."/>
            <person name="Parro V."/>
            <person name="Pohl T.M."/>
            <person name="Portetelle D."/>
            <person name="Porwollik S."/>
            <person name="Prescott A.M."/>
            <person name="Presecan E."/>
            <person name="Pujic P."/>
            <person name="Purnelle B."/>
            <person name="Rapoport G."/>
            <person name="Rey M."/>
            <person name="Reynolds S."/>
            <person name="Rieger M."/>
            <person name="Rivolta C."/>
            <person name="Rocha E."/>
            <person name="Roche B."/>
            <person name="Rose M."/>
            <person name="Sadaie Y."/>
            <person name="Sato T."/>
            <person name="Scanlan E."/>
            <person name="Schleich S."/>
            <person name="Schroeter R."/>
            <person name="Scoffone F."/>
            <person name="Sekiguchi J."/>
            <person name="Sekowska A."/>
            <person name="Seror S.J."/>
            <person name="Serror P."/>
            <person name="Shin B.-S."/>
            <person name="Soldo B."/>
            <person name="Sorokin A."/>
            <person name="Tacconi E."/>
            <person name="Takagi T."/>
            <person name="Takahashi H."/>
            <person name="Takemaru K."/>
            <person name="Takeuchi M."/>
            <person name="Tamakoshi A."/>
            <person name="Tanaka T."/>
            <person name="Terpstra P."/>
            <person name="Tognoni A."/>
            <person name="Tosato V."/>
            <person name="Uchiyama S."/>
            <person name="Vandenbol M."/>
            <person name="Vannier F."/>
            <person name="Vassarotti A."/>
            <person name="Viari A."/>
            <person name="Wambutt R."/>
            <person name="Wedler E."/>
            <person name="Wedler H."/>
            <person name="Weitzenegger T."/>
            <person name="Winters P."/>
            <person name="Wipat A."/>
            <person name="Yamamoto H."/>
            <person name="Yamane K."/>
            <person name="Yasumoto K."/>
            <person name="Yata K."/>
            <person name="Yoshida K."/>
            <person name="Yoshikawa H.-F."/>
            <person name="Zumstein E."/>
            <person name="Yoshikawa H."/>
            <person name="Danchin A."/>
        </authorList>
    </citation>
    <scope>NUCLEOTIDE SEQUENCE [LARGE SCALE GENOMIC DNA]</scope>
    <source>
        <strain>168</strain>
    </source>
</reference>
<reference key="2">
    <citation type="submission" date="1997-08" db="EMBL/GenBank/DDBJ databases">
        <title>Bacillus subtilis chromosomal region downstream nprE.</title>
        <authorList>
            <person name="Bertero M."/>
            <person name="Presecan E."/>
            <person name="Glaser P."/>
            <person name="Richou A."/>
            <person name="Danchin A."/>
        </authorList>
    </citation>
    <scope>NUCLEOTIDE SEQUENCE [GENOMIC DNA] OF 229-1148</scope>
    <source>
        <strain>168</strain>
    </source>
</reference>
<reference key="3">
    <citation type="journal article" date="1973" name="J. Biol. Chem.">
        <title>Role of pyruvate carboxylase, phosphoenolpyruvate carboxykinase, and malic enzyme during growth and sporulation of Bacillus subtilis.</title>
        <authorList>
            <person name="Diesterhaft M.D."/>
            <person name="Freese E."/>
        </authorList>
    </citation>
    <scope>FUNCTION</scope>
    <scope>CATALYTIC ACTIVITY</scope>
    <scope>COFACTOR</scope>
    <scope>ACTIVITY REGULATION</scope>
</reference>
<reference key="4">
    <citation type="journal article" date="2022" name="MBio">
        <title>Sustained control of pyruvate carboxylase by the essential second messenger cyclic di-AMP in Bacillus subtilis.</title>
        <authorList>
            <person name="Krueger L."/>
            <person name="Herzberg C."/>
            <person name="Wicke D."/>
            <person name="Scholz P."/>
            <person name="Schmitt K."/>
            <person name="Turdiev A."/>
            <person name="Lee V.T."/>
            <person name="Ischebeck T."/>
            <person name="Stuelke J."/>
        </authorList>
    </citation>
    <scope>CATALYTIC ACTIVITY</scope>
    <scope>COFACTOR</scope>
    <scope>ACTIVITY REGULATION</scope>
    <scope>BIOPHYSICOCHEMICAL PROPERTIES</scope>
    <scope>INTERACTION WITH APO-DARB</scope>
    <source>
        <strain>168</strain>
    </source>
</reference>
<dbReference type="EC" id="6.4.1.1" evidence="6 7"/>
<dbReference type="EMBL" id="AL009126">
    <property type="protein sequence ID" value="CAB13359.1"/>
    <property type="molecule type" value="Genomic_DNA"/>
</dbReference>
<dbReference type="EMBL" id="Z97025">
    <property type="protein sequence ID" value="CAB09721.1"/>
    <property type="status" value="ALT_FRAME"/>
    <property type="molecule type" value="Genomic_DNA"/>
</dbReference>
<dbReference type="EMBL" id="Z98682">
    <property type="protein sequence ID" value="CAB11339.1"/>
    <property type="molecule type" value="Genomic_DNA"/>
</dbReference>
<dbReference type="PIR" id="F69685">
    <property type="entry name" value="F69685"/>
</dbReference>
<dbReference type="RefSeq" id="NP_389369.1">
    <property type="nucleotide sequence ID" value="NC_000964.3"/>
</dbReference>
<dbReference type="RefSeq" id="WP_003244778.1">
    <property type="nucleotide sequence ID" value="NZ_OZ025638.1"/>
</dbReference>
<dbReference type="SMR" id="Q9KWU4"/>
<dbReference type="FunCoup" id="Q9KWU4">
    <property type="interactions" value="444"/>
</dbReference>
<dbReference type="STRING" id="224308.BSU14860"/>
<dbReference type="jPOST" id="Q9KWU4"/>
<dbReference type="PaxDb" id="224308-BSU14860"/>
<dbReference type="EnsemblBacteria" id="CAB13359">
    <property type="protein sequence ID" value="CAB13359"/>
    <property type="gene ID" value="BSU_14860"/>
</dbReference>
<dbReference type="GeneID" id="935920"/>
<dbReference type="KEGG" id="bsu:BSU14860"/>
<dbReference type="PATRIC" id="fig|224308.179.peg.1620"/>
<dbReference type="eggNOG" id="COG1038">
    <property type="taxonomic scope" value="Bacteria"/>
</dbReference>
<dbReference type="InParanoid" id="Q9KWU4"/>
<dbReference type="OrthoDB" id="9807469at2"/>
<dbReference type="PhylomeDB" id="Q9KWU4"/>
<dbReference type="BioCyc" id="BSUB:BSU14860-MONOMER"/>
<dbReference type="PRO" id="PR:Q9KWU4"/>
<dbReference type="Proteomes" id="UP000001570">
    <property type="component" value="Chromosome"/>
</dbReference>
<dbReference type="GO" id="GO:0005524">
    <property type="term" value="F:ATP binding"/>
    <property type="evidence" value="ECO:0007669"/>
    <property type="project" value="UniProtKB-KW"/>
</dbReference>
<dbReference type="GO" id="GO:0046872">
    <property type="term" value="F:metal ion binding"/>
    <property type="evidence" value="ECO:0007669"/>
    <property type="project" value="UniProtKB-KW"/>
</dbReference>
<dbReference type="GO" id="GO:0004736">
    <property type="term" value="F:pyruvate carboxylase activity"/>
    <property type="evidence" value="ECO:0000318"/>
    <property type="project" value="GO_Central"/>
</dbReference>
<dbReference type="GO" id="GO:0006094">
    <property type="term" value="P:gluconeogenesis"/>
    <property type="evidence" value="ECO:0000318"/>
    <property type="project" value="GO_Central"/>
</dbReference>
<dbReference type="GO" id="GO:0006090">
    <property type="term" value="P:pyruvate metabolic process"/>
    <property type="evidence" value="ECO:0000318"/>
    <property type="project" value="GO_Central"/>
</dbReference>
<dbReference type="CDD" id="cd06850">
    <property type="entry name" value="biotinyl_domain"/>
    <property type="match status" value="1"/>
</dbReference>
<dbReference type="CDD" id="cd07937">
    <property type="entry name" value="DRE_TIM_PC_TC_5S"/>
    <property type="match status" value="1"/>
</dbReference>
<dbReference type="FunFam" id="2.40.50.100:FF:000003">
    <property type="entry name" value="Acetyl-CoA carboxylase biotin carboxyl carrier protein"/>
    <property type="match status" value="1"/>
</dbReference>
<dbReference type="FunFam" id="3.30.1490.20:FF:000018">
    <property type="entry name" value="Biotin carboxylase"/>
    <property type="match status" value="1"/>
</dbReference>
<dbReference type="FunFam" id="3.40.50.20:FF:000010">
    <property type="entry name" value="Propionyl-CoA carboxylase subunit alpha"/>
    <property type="match status" value="1"/>
</dbReference>
<dbReference type="FunFam" id="3.10.600.10:FF:000004">
    <property type="entry name" value="Pyruvate carboxylase"/>
    <property type="match status" value="1"/>
</dbReference>
<dbReference type="FunFam" id="3.20.20.70:FF:000033">
    <property type="entry name" value="Pyruvate carboxylase"/>
    <property type="match status" value="1"/>
</dbReference>
<dbReference type="FunFam" id="3.30.470.20:FF:000012">
    <property type="entry name" value="Pyruvate carboxylase"/>
    <property type="match status" value="1"/>
</dbReference>
<dbReference type="Gene3D" id="2.40.50.100">
    <property type="match status" value="1"/>
</dbReference>
<dbReference type="Gene3D" id="3.20.20.70">
    <property type="entry name" value="Aldolase class I"/>
    <property type="match status" value="1"/>
</dbReference>
<dbReference type="Gene3D" id="3.30.470.20">
    <property type="entry name" value="ATP-grasp fold, B domain"/>
    <property type="match status" value="1"/>
</dbReference>
<dbReference type="Gene3D" id="3.10.600.10">
    <property type="entry name" value="pyruvate carboxylase f1077a mutant domain"/>
    <property type="match status" value="1"/>
</dbReference>
<dbReference type="InterPro" id="IPR013785">
    <property type="entry name" value="Aldolase_TIM"/>
</dbReference>
<dbReference type="InterPro" id="IPR011761">
    <property type="entry name" value="ATP-grasp"/>
</dbReference>
<dbReference type="InterPro" id="IPR005481">
    <property type="entry name" value="BC-like_N"/>
</dbReference>
<dbReference type="InterPro" id="IPR011764">
    <property type="entry name" value="Biotin_carboxylation_dom"/>
</dbReference>
<dbReference type="InterPro" id="IPR005482">
    <property type="entry name" value="Biotin_COase_C"/>
</dbReference>
<dbReference type="InterPro" id="IPR000089">
    <property type="entry name" value="Biotin_lipoyl"/>
</dbReference>
<dbReference type="InterPro" id="IPR003379">
    <property type="entry name" value="Carboxylase_cons_dom"/>
</dbReference>
<dbReference type="InterPro" id="IPR005479">
    <property type="entry name" value="CbamoylP_synth_lsu-like_ATP-bd"/>
</dbReference>
<dbReference type="InterPro" id="IPR055268">
    <property type="entry name" value="PCB-like"/>
</dbReference>
<dbReference type="InterPro" id="IPR016185">
    <property type="entry name" value="PreATP-grasp_dom_sf"/>
</dbReference>
<dbReference type="InterPro" id="IPR000891">
    <property type="entry name" value="PYR_CT"/>
</dbReference>
<dbReference type="InterPro" id="IPR005930">
    <property type="entry name" value="Pyruv_COase"/>
</dbReference>
<dbReference type="InterPro" id="IPR011054">
    <property type="entry name" value="Rudment_hybrid_motif"/>
</dbReference>
<dbReference type="InterPro" id="IPR011053">
    <property type="entry name" value="Single_hybrid_motif"/>
</dbReference>
<dbReference type="NCBIfam" id="NF006761">
    <property type="entry name" value="PRK09282.1"/>
    <property type="match status" value="1"/>
</dbReference>
<dbReference type="NCBIfam" id="NF009554">
    <property type="entry name" value="PRK12999.1"/>
    <property type="match status" value="1"/>
</dbReference>
<dbReference type="NCBIfam" id="TIGR01235">
    <property type="entry name" value="pyruv_carbox"/>
    <property type="match status" value="1"/>
</dbReference>
<dbReference type="PANTHER" id="PTHR43778">
    <property type="entry name" value="PYRUVATE CARBOXYLASE"/>
    <property type="match status" value="1"/>
</dbReference>
<dbReference type="PANTHER" id="PTHR43778:SF2">
    <property type="entry name" value="PYRUVATE CARBOXYLASE, MITOCHONDRIAL"/>
    <property type="match status" value="1"/>
</dbReference>
<dbReference type="Pfam" id="PF02785">
    <property type="entry name" value="Biotin_carb_C"/>
    <property type="match status" value="1"/>
</dbReference>
<dbReference type="Pfam" id="PF00289">
    <property type="entry name" value="Biotin_carb_N"/>
    <property type="match status" value="1"/>
</dbReference>
<dbReference type="Pfam" id="PF00364">
    <property type="entry name" value="Biotin_lipoyl"/>
    <property type="match status" value="1"/>
</dbReference>
<dbReference type="Pfam" id="PF02786">
    <property type="entry name" value="CPSase_L_D2"/>
    <property type="match status" value="1"/>
</dbReference>
<dbReference type="Pfam" id="PF00682">
    <property type="entry name" value="HMGL-like"/>
    <property type="match status" value="1"/>
</dbReference>
<dbReference type="Pfam" id="PF02436">
    <property type="entry name" value="PYC_OADA"/>
    <property type="match status" value="1"/>
</dbReference>
<dbReference type="PIRSF" id="PIRSF001594">
    <property type="entry name" value="Pyruv_carbox"/>
    <property type="match status" value="1"/>
</dbReference>
<dbReference type="SMART" id="SM00878">
    <property type="entry name" value="Biotin_carb_C"/>
    <property type="match status" value="1"/>
</dbReference>
<dbReference type="SUPFAM" id="SSF51569">
    <property type="entry name" value="Aldolase"/>
    <property type="match status" value="1"/>
</dbReference>
<dbReference type="SUPFAM" id="SSF56059">
    <property type="entry name" value="Glutathione synthetase ATP-binding domain-like"/>
    <property type="match status" value="1"/>
</dbReference>
<dbReference type="SUPFAM" id="SSF89000">
    <property type="entry name" value="post-HMGL domain-like"/>
    <property type="match status" value="1"/>
</dbReference>
<dbReference type="SUPFAM" id="SSF52440">
    <property type="entry name" value="PreATP-grasp domain"/>
    <property type="match status" value="1"/>
</dbReference>
<dbReference type="SUPFAM" id="SSF51246">
    <property type="entry name" value="Rudiment single hybrid motif"/>
    <property type="match status" value="1"/>
</dbReference>
<dbReference type="SUPFAM" id="SSF51230">
    <property type="entry name" value="Single hybrid motif"/>
    <property type="match status" value="1"/>
</dbReference>
<dbReference type="PROSITE" id="PS50975">
    <property type="entry name" value="ATP_GRASP"/>
    <property type="match status" value="1"/>
</dbReference>
<dbReference type="PROSITE" id="PS50979">
    <property type="entry name" value="BC"/>
    <property type="match status" value="1"/>
</dbReference>
<dbReference type="PROSITE" id="PS50968">
    <property type="entry name" value="BIOTINYL_LIPOYL"/>
    <property type="match status" value="1"/>
</dbReference>
<dbReference type="PROSITE" id="PS00866">
    <property type="entry name" value="CPSASE_1"/>
    <property type="match status" value="1"/>
</dbReference>
<dbReference type="PROSITE" id="PS00867">
    <property type="entry name" value="CPSASE_2"/>
    <property type="match status" value="1"/>
</dbReference>
<dbReference type="PROSITE" id="PS50991">
    <property type="entry name" value="PYR_CT"/>
    <property type="match status" value="1"/>
</dbReference>
<gene>
    <name type="primary">pyc</name>
    <name type="synonym">pycA</name>
    <name type="synonym">ylaP</name>
    <name type="ordered locus">BSU14860</name>
</gene>
<feature type="chain" id="PRO_0000146826" description="Pyruvate carboxylase">
    <location>
        <begin position="1"/>
        <end position="1148"/>
    </location>
</feature>
<feature type="domain" description="Biotin carboxylation">
    <location>
        <begin position="1"/>
        <end position="457"/>
    </location>
</feature>
<feature type="domain" description="ATP-grasp" evidence="3">
    <location>
        <begin position="125"/>
        <end position="321"/>
    </location>
</feature>
<feature type="domain" description="Pyruvate carboxyltransferase" evidence="5">
    <location>
        <begin position="534"/>
        <end position="802"/>
    </location>
</feature>
<feature type="domain" description="Biotinyl-binding" evidence="4">
    <location>
        <begin position="1071"/>
        <end position="1146"/>
    </location>
</feature>
<feature type="active site" evidence="2">
    <location>
        <position position="242"/>
    </location>
</feature>
<feature type="binding site" evidence="1">
    <location>
        <position position="121"/>
    </location>
    <ligand>
        <name>ATP</name>
        <dbReference type="ChEBI" id="CHEBI:30616"/>
    </ligand>
</feature>
<feature type="binding site" evidence="1">
    <location>
        <position position="205"/>
    </location>
    <ligand>
        <name>ATP</name>
        <dbReference type="ChEBI" id="CHEBI:30616"/>
    </ligand>
</feature>
<feature type="binding site" evidence="1">
    <location>
        <position position="240"/>
    </location>
    <ligand>
        <name>ATP</name>
        <dbReference type="ChEBI" id="CHEBI:30616"/>
    </ligand>
</feature>
<feature type="binding site" evidence="1">
    <location>
        <begin position="542"/>
        <end position="546"/>
    </location>
    <ligand>
        <name>substrate</name>
    </ligand>
</feature>
<feature type="binding site" evidence="1">
    <location>
        <position position="543"/>
    </location>
    <ligand>
        <name>a divalent metal cation</name>
        <dbReference type="ChEBI" id="CHEBI:60240"/>
    </ligand>
</feature>
<feature type="binding site" evidence="1">
    <location>
        <position position="615"/>
    </location>
    <ligand>
        <name>substrate</name>
    </ligand>
</feature>
<feature type="binding site" description="via carbamate group" evidence="1">
    <location>
        <position position="712"/>
    </location>
    <ligand>
        <name>a divalent metal cation</name>
        <dbReference type="ChEBI" id="CHEBI:60240"/>
    </ligand>
</feature>
<feature type="binding site" evidence="1">
    <location>
        <position position="741"/>
    </location>
    <ligand>
        <name>a divalent metal cation</name>
        <dbReference type="ChEBI" id="CHEBI:60240"/>
    </ligand>
</feature>
<feature type="binding site" evidence="1">
    <location>
        <position position="743"/>
    </location>
    <ligand>
        <name>a divalent metal cation</name>
        <dbReference type="ChEBI" id="CHEBI:60240"/>
    </ligand>
</feature>
<feature type="binding site" evidence="1">
    <location>
        <position position="876"/>
    </location>
    <ligand>
        <name>substrate</name>
    </ligand>
</feature>
<feature type="site" description="Involved in CO(2) fixation" evidence="2">
    <location>
        <position position="234"/>
    </location>
</feature>
<feature type="modified residue" description="N6-carboxylysine" evidence="1">
    <location>
        <position position="712"/>
    </location>
</feature>
<feature type="modified residue" description="N6-biotinyllysine" evidence="1 4">
    <location>
        <position position="1112"/>
    </location>
</feature>
<name>PYC_BACSU</name>
<evidence type="ECO:0000250" key="1"/>
<evidence type="ECO:0000255" key="2"/>
<evidence type="ECO:0000255" key="3">
    <source>
        <dbReference type="PROSITE-ProRule" id="PRU00409"/>
    </source>
</evidence>
<evidence type="ECO:0000255" key="4">
    <source>
        <dbReference type="PROSITE-ProRule" id="PRU01066"/>
    </source>
</evidence>
<evidence type="ECO:0000255" key="5">
    <source>
        <dbReference type="PROSITE-ProRule" id="PRU01151"/>
    </source>
</evidence>
<evidence type="ECO:0000269" key="6">
    <source>
    </source>
</evidence>
<evidence type="ECO:0000269" key="7">
    <source>
    </source>
</evidence>
<evidence type="ECO:0000303" key="8">
    <source>
    </source>
</evidence>
<evidence type="ECO:0000305" key="9"/>
<evidence type="ECO:0000305" key="10">
    <source>
    </source>
</evidence>
<accession>Q9KWU4</accession>
<accession>O07640</accession>
<accession>Q9KWU5</accession>